<reference key="1">
    <citation type="submission" date="2006-06" db="EMBL/GenBank/DDBJ databases">
        <title>Complete sequence of chromosome of Mycobacterium sp. MCS.</title>
        <authorList>
            <consortium name="US DOE Joint Genome Institute"/>
            <person name="Copeland A."/>
            <person name="Lucas S."/>
            <person name="Lapidus A."/>
            <person name="Barry K."/>
            <person name="Detter J.C."/>
            <person name="Glavina del Rio T."/>
            <person name="Hammon N."/>
            <person name="Israni S."/>
            <person name="Dalin E."/>
            <person name="Tice H."/>
            <person name="Pitluck S."/>
            <person name="Martinez M."/>
            <person name="Schmutz J."/>
            <person name="Larimer F."/>
            <person name="Land M."/>
            <person name="Hauser L."/>
            <person name="Kyrpides N."/>
            <person name="Kim E."/>
            <person name="Miller C.D."/>
            <person name="Hughes J.E."/>
            <person name="Anderson A.J."/>
            <person name="Sims R.C."/>
            <person name="Richardson P."/>
        </authorList>
    </citation>
    <scope>NUCLEOTIDE SEQUENCE [LARGE SCALE GENOMIC DNA]</scope>
    <source>
        <strain>MCS</strain>
    </source>
</reference>
<protein>
    <recommendedName>
        <fullName evidence="1">SsrA-binding protein</fullName>
    </recommendedName>
    <alternativeName>
        <fullName evidence="1">Small protein B</fullName>
    </alternativeName>
</protein>
<feature type="chain" id="PRO_0000331067" description="SsrA-binding protein">
    <location>
        <begin position="1"/>
        <end position="168"/>
    </location>
</feature>
<proteinExistence type="inferred from homology"/>
<accession>Q1BBL0</accession>
<keyword id="KW-0963">Cytoplasm</keyword>
<keyword id="KW-0694">RNA-binding</keyword>
<dbReference type="EMBL" id="CP000384">
    <property type="protein sequence ID" value="ABG07724.1"/>
    <property type="molecule type" value="Genomic_DNA"/>
</dbReference>
<dbReference type="SMR" id="Q1BBL0"/>
<dbReference type="KEGG" id="mmc:Mmcs_1613"/>
<dbReference type="HOGENOM" id="CLU_108953_2_1_11"/>
<dbReference type="BioCyc" id="MSP164756:G1G6O-1651-MONOMER"/>
<dbReference type="GO" id="GO:0005829">
    <property type="term" value="C:cytosol"/>
    <property type="evidence" value="ECO:0007669"/>
    <property type="project" value="TreeGrafter"/>
</dbReference>
<dbReference type="GO" id="GO:0003723">
    <property type="term" value="F:RNA binding"/>
    <property type="evidence" value="ECO:0007669"/>
    <property type="project" value="UniProtKB-UniRule"/>
</dbReference>
<dbReference type="GO" id="GO:0070929">
    <property type="term" value="P:trans-translation"/>
    <property type="evidence" value="ECO:0007669"/>
    <property type="project" value="UniProtKB-UniRule"/>
</dbReference>
<dbReference type="CDD" id="cd09294">
    <property type="entry name" value="SmpB"/>
    <property type="match status" value="1"/>
</dbReference>
<dbReference type="Gene3D" id="2.40.280.10">
    <property type="match status" value="1"/>
</dbReference>
<dbReference type="HAMAP" id="MF_00023">
    <property type="entry name" value="SmpB"/>
    <property type="match status" value="1"/>
</dbReference>
<dbReference type="InterPro" id="IPR023620">
    <property type="entry name" value="SmpB"/>
</dbReference>
<dbReference type="InterPro" id="IPR000037">
    <property type="entry name" value="SsrA-bd_prot"/>
</dbReference>
<dbReference type="InterPro" id="IPR020081">
    <property type="entry name" value="SsrA-bd_prot_CS"/>
</dbReference>
<dbReference type="NCBIfam" id="NF003843">
    <property type="entry name" value="PRK05422.1"/>
    <property type="match status" value="1"/>
</dbReference>
<dbReference type="NCBIfam" id="TIGR00086">
    <property type="entry name" value="smpB"/>
    <property type="match status" value="1"/>
</dbReference>
<dbReference type="PANTHER" id="PTHR30308:SF2">
    <property type="entry name" value="SSRA-BINDING PROTEIN"/>
    <property type="match status" value="1"/>
</dbReference>
<dbReference type="PANTHER" id="PTHR30308">
    <property type="entry name" value="TMRNA-BINDING COMPONENT OF TRANS-TRANSLATION TAGGING COMPLEX"/>
    <property type="match status" value="1"/>
</dbReference>
<dbReference type="Pfam" id="PF01668">
    <property type="entry name" value="SmpB"/>
    <property type="match status" value="1"/>
</dbReference>
<dbReference type="SUPFAM" id="SSF74982">
    <property type="entry name" value="Small protein B (SmpB)"/>
    <property type="match status" value="1"/>
</dbReference>
<dbReference type="PROSITE" id="PS01317">
    <property type="entry name" value="SSRP"/>
    <property type="match status" value="1"/>
</dbReference>
<comment type="function">
    <text evidence="1">Required for rescue of stalled ribosomes mediated by trans-translation. Binds to transfer-messenger RNA (tmRNA), required for stable association of tmRNA with ribosomes. tmRNA and SmpB together mimic tRNA shape, replacing the anticodon stem-loop with SmpB. tmRNA is encoded by the ssrA gene; the 2 termini fold to resemble tRNA(Ala) and it encodes a 'tag peptide', a short internal open reading frame. During trans-translation Ala-aminoacylated tmRNA acts like a tRNA, entering the A-site of stalled ribosomes, displacing the stalled mRNA. The ribosome then switches to translate the ORF on the tmRNA; the nascent peptide is terminated with the 'tag peptide' encoded by the tmRNA and targeted for degradation. The ribosome is freed to recommence translation, which seems to be the essential function of trans-translation.</text>
</comment>
<comment type="subcellular location">
    <subcellularLocation>
        <location evidence="1">Cytoplasm</location>
    </subcellularLocation>
    <text evidence="1">The tmRNA-SmpB complex associates with stalled 70S ribosomes.</text>
</comment>
<comment type="similarity">
    <text evidence="1">Belongs to the SmpB family.</text>
</comment>
<evidence type="ECO:0000255" key="1">
    <source>
        <dbReference type="HAMAP-Rule" id="MF_00023"/>
    </source>
</evidence>
<name>SSRP_MYCSS</name>
<gene>
    <name evidence="1" type="primary">smpB</name>
    <name type="ordered locus">Mmcs_1613</name>
</gene>
<sequence>MAAKKAGKAGATKDRNNQVVASNRRARHNYAILDTYEAGIALMGTEVKSLRDGQASLADAFATVDDGEIWLRNLHIPEYQHGSWTNHAPRRNRKLLLHRREIDNLIGKIRDGNLTLVPLSLYFTGGKVKVELALARGKQAHDKRQDLARRDAEREVVRELGRRAKGMS</sequence>
<organism>
    <name type="scientific">Mycobacterium sp. (strain MCS)</name>
    <dbReference type="NCBI Taxonomy" id="164756"/>
    <lineage>
        <taxon>Bacteria</taxon>
        <taxon>Bacillati</taxon>
        <taxon>Actinomycetota</taxon>
        <taxon>Actinomycetes</taxon>
        <taxon>Mycobacteriales</taxon>
        <taxon>Mycobacteriaceae</taxon>
        <taxon>Mycobacterium</taxon>
    </lineage>
</organism>